<evidence type="ECO:0000255" key="1">
    <source>
        <dbReference type="HAMAP-Rule" id="MF_01023"/>
    </source>
</evidence>
<feature type="chain" id="PRO_1000149084" description="Histidinol-phosphate aminotransferase">
    <location>
        <begin position="1"/>
        <end position="368"/>
    </location>
</feature>
<feature type="modified residue" description="N6-(pyridoxal phosphate)lysine" evidence="1">
    <location>
        <position position="215"/>
    </location>
</feature>
<organism>
    <name type="scientific">Buchnera aphidicola subsp. Acyrthosiphon pisum (strain 5A)</name>
    <dbReference type="NCBI Taxonomy" id="563178"/>
    <lineage>
        <taxon>Bacteria</taxon>
        <taxon>Pseudomonadati</taxon>
        <taxon>Pseudomonadota</taxon>
        <taxon>Gammaproteobacteria</taxon>
        <taxon>Enterobacterales</taxon>
        <taxon>Erwiniaceae</taxon>
        <taxon>Buchnera</taxon>
    </lineage>
</organism>
<name>HIS8_BUCA5</name>
<proteinExistence type="inferred from homology"/>
<accession>B8D8Q3</accession>
<keyword id="KW-0028">Amino-acid biosynthesis</keyword>
<keyword id="KW-0032">Aminotransferase</keyword>
<keyword id="KW-0368">Histidine biosynthesis</keyword>
<keyword id="KW-0663">Pyridoxal phosphate</keyword>
<keyword id="KW-0808">Transferase</keyword>
<sequence>MTDNVLKLSRKNIKKLIPYQSARRIGGEHGNILLNANESPVSIFFKLKKKPFNRYPECQPSKLISSYAHYVNLSCNQILATRGADEGIELLIKAFCEPGKDAIIYCPPTYDMYRINATIAGVEIKEIPTIKNTWQLDLLNIKLNLSRVKLIYICNPNNPTGNIFFKKDLIFLLNITLGQALVVIDEAYIEFSPEESMTNYLKDYPNLVVLRTLSKAFALAGIRCGFTLAKKEIIQTLSKVISPYPISIPVSDIAIRSLEKDYVQLMKNRVLDSNNNRIWLINQLKNITCVETVFESNANYVLVKFSMFEKVFETLWNKGIILRNQNEKMNLKKCIRISMGTRSESLRLIKELKIFSKKNMCQGEMSEK</sequence>
<dbReference type="EC" id="2.6.1.9" evidence="1"/>
<dbReference type="EMBL" id="CP001161">
    <property type="protein sequence ID" value="ACL30475.1"/>
    <property type="molecule type" value="Genomic_DNA"/>
</dbReference>
<dbReference type="RefSeq" id="WP_009874056.1">
    <property type="nucleotide sequence ID" value="NC_011833.1"/>
</dbReference>
<dbReference type="SMR" id="B8D8Q3"/>
<dbReference type="KEGG" id="bap:BUAP5A_099"/>
<dbReference type="HOGENOM" id="CLU_017584_3_1_6"/>
<dbReference type="OrthoDB" id="9813612at2"/>
<dbReference type="UniPathway" id="UPA00031">
    <property type="reaction ID" value="UER00012"/>
</dbReference>
<dbReference type="Proteomes" id="UP000006904">
    <property type="component" value="Chromosome"/>
</dbReference>
<dbReference type="GO" id="GO:0004400">
    <property type="term" value="F:histidinol-phosphate transaminase activity"/>
    <property type="evidence" value="ECO:0007669"/>
    <property type="project" value="UniProtKB-UniRule"/>
</dbReference>
<dbReference type="GO" id="GO:0030170">
    <property type="term" value="F:pyridoxal phosphate binding"/>
    <property type="evidence" value="ECO:0007669"/>
    <property type="project" value="InterPro"/>
</dbReference>
<dbReference type="GO" id="GO:0000105">
    <property type="term" value="P:L-histidine biosynthetic process"/>
    <property type="evidence" value="ECO:0007669"/>
    <property type="project" value="UniProtKB-UniRule"/>
</dbReference>
<dbReference type="CDD" id="cd00609">
    <property type="entry name" value="AAT_like"/>
    <property type="match status" value="1"/>
</dbReference>
<dbReference type="Gene3D" id="3.90.1150.10">
    <property type="entry name" value="Aspartate Aminotransferase, domain 1"/>
    <property type="match status" value="1"/>
</dbReference>
<dbReference type="Gene3D" id="3.40.640.10">
    <property type="entry name" value="Type I PLP-dependent aspartate aminotransferase-like (Major domain)"/>
    <property type="match status" value="1"/>
</dbReference>
<dbReference type="HAMAP" id="MF_01023">
    <property type="entry name" value="HisC_aminotrans_2"/>
    <property type="match status" value="1"/>
</dbReference>
<dbReference type="InterPro" id="IPR001917">
    <property type="entry name" value="Aminotrans_II_pyridoxalP_BS"/>
</dbReference>
<dbReference type="InterPro" id="IPR004839">
    <property type="entry name" value="Aminotransferase_I/II_large"/>
</dbReference>
<dbReference type="InterPro" id="IPR005861">
    <property type="entry name" value="HisP_aminotrans"/>
</dbReference>
<dbReference type="InterPro" id="IPR015424">
    <property type="entry name" value="PyrdxlP-dep_Trfase"/>
</dbReference>
<dbReference type="InterPro" id="IPR015421">
    <property type="entry name" value="PyrdxlP-dep_Trfase_major"/>
</dbReference>
<dbReference type="InterPro" id="IPR015422">
    <property type="entry name" value="PyrdxlP-dep_Trfase_small"/>
</dbReference>
<dbReference type="NCBIfam" id="TIGR01141">
    <property type="entry name" value="hisC"/>
    <property type="match status" value="1"/>
</dbReference>
<dbReference type="PANTHER" id="PTHR42885:SF2">
    <property type="entry name" value="HISTIDINOL-PHOSPHATE AMINOTRANSFERASE"/>
    <property type="match status" value="1"/>
</dbReference>
<dbReference type="PANTHER" id="PTHR42885">
    <property type="entry name" value="HISTIDINOL-PHOSPHATE AMINOTRANSFERASE-RELATED"/>
    <property type="match status" value="1"/>
</dbReference>
<dbReference type="Pfam" id="PF00155">
    <property type="entry name" value="Aminotran_1_2"/>
    <property type="match status" value="1"/>
</dbReference>
<dbReference type="SUPFAM" id="SSF53383">
    <property type="entry name" value="PLP-dependent transferases"/>
    <property type="match status" value="1"/>
</dbReference>
<dbReference type="PROSITE" id="PS00599">
    <property type="entry name" value="AA_TRANSFER_CLASS_2"/>
    <property type="match status" value="1"/>
</dbReference>
<reference key="1">
    <citation type="journal article" date="2009" name="Science">
        <title>The dynamics and time scale of ongoing genomic erosion in symbiotic bacteria.</title>
        <authorList>
            <person name="Moran N.A."/>
            <person name="McLaughlin H.J."/>
            <person name="Sorek R."/>
        </authorList>
    </citation>
    <scope>NUCLEOTIDE SEQUENCE [LARGE SCALE GENOMIC DNA]</scope>
    <source>
        <strain>5A</strain>
    </source>
</reference>
<gene>
    <name evidence="1" type="primary">hisC</name>
    <name type="ordered locus">BUAP5A_099</name>
</gene>
<comment type="catalytic activity">
    <reaction evidence="1">
        <text>L-histidinol phosphate + 2-oxoglutarate = 3-(imidazol-4-yl)-2-oxopropyl phosphate + L-glutamate</text>
        <dbReference type="Rhea" id="RHEA:23744"/>
        <dbReference type="ChEBI" id="CHEBI:16810"/>
        <dbReference type="ChEBI" id="CHEBI:29985"/>
        <dbReference type="ChEBI" id="CHEBI:57766"/>
        <dbReference type="ChEBI" id="CHEBI:57980"/>
        <dbReference type="EC" id="2.6.1.9"/>
    </reaction>
</comment>
<comment type="cofactor">
    <cofactor evidence="1">
        <name>pyridoxal 5'-phosphate</name>
        <dbReference type="ChEBI" id="CHEBI:597326"/>
    </cofactor>
</comment>
<comment type="pathway">
    <text evidence="1">Amino-acid biosynthesis; L-histidine biosynthesis; L-histidine from 5-phospho-alpha-D-ribose 1-diphosphate: step 7/9.</text>
</comment>
<comment type="subunit">
    <text evidence="1">Homodimer.</text>
</comment>
<comment type="similarity">
    <text evidence="1">Belongs to the class-II pyridoxal-phosphate-dependent aminotransferase family. Histidinol-phosphate aminotransferase subfamily.</text>
</comment>
<protein>
    <recommendedName>
        <fullName evidence="1">Histidinol-phosphate aminotransferase</fullName>
        <ecNumber evidence="1">2.6.1.9</ecNumber>
    </recommendedName>
    <alternativeName>
        <fullName evidence="1">Imidazole acetol-phosphate transaminase</fullName>
    </alternativeName>
</protein>